<dbReference type="EMBL" id="U28495">
    <property type="protein sequence ID" value="AAC52234.1"/>
    <property type="molecule type" value="mRNA"/>
</dbReference>
<dbReference type="EMBL" id="X95761">
    <property type="protein sequence ID" value="CAA65067.1"/>
    <property type="molecule type" value="mRNA"/>
</dbReference>
<dbReference type="EMBL" id="AF177032">
    <property type="protein sequence ID" value="AAG09271.1"/>
    <property type="molecule type" value="mRNA"/>
</dbReference>
<dbReference type="EMBL" id="AB093254">
    <property type="protein sequence ID" value="BAC41438.1"/>
    <property type="status" value="ALT_INIT"/>
    <property type="molecule type" value="mRNA"/>
</dbReference>
<dbReference type="EMBL" id="AK167628">
    <property type="protein sequence ID" value="BAE39679.1"/>
    <property type="molecule type" value="mRNA"/>
</dbReference>
<dbReference type="EMBL" id="AK171223">
    <property type="protein sequence ID" value="BAE42325.1"/>
    <property type="molecule type" value="mRNA"/>
</dbReference>
<dbReference type="EMBL" id="AC145168">
    <property type="status" value="NOT_ANNOTATED_CDS"/>
    <property type="molecule type" value="Genomic_DNA"/>
</dbReference>
<dbReference type="EMBL" id="BC006589">
    <property type="protein sequence ID" value="AAH06589.1"/>
    <property type="molecule type" value="mRNA"/>
</dbReference>
<dbReference type="CCDS" id="CCDS17481.1">
    <molecule id="Q60875-1"/>
</dbReference>
<dbReference type="CCDS" id="CCDS57221.1">
    <molecule id="Q60875-5"/>
</dbReference>
<dbReference type="CCDS" id="CCDS57222.1">
    <molecule id="Q60875-4"/>
</dbReference>
<dbReference type="PIR" id="I49342">
    <property type="entry name" value="I49342"/>
</dbReference>
<dbReference type="RefSeq" id="NP_001185840.1">
    <property type="nucleotide sequence ID" value="NM_001198911.1"/>
</dbReference>
<dbReference type="RefSeq" id="NP_001185841.1">
    <molecule id="Q60875-4"/>
    <property type="nucleotide sequence ID" value="NM_001198912.2"/>
</dbReference>
<dbReference type="RefSeq" id="NP_001185842.1">
    <molecule id="Q60875-5"/>
    <property type="nucleotide sequence ID" value="NM_001198913.2"/>
</dbReference>
<dbReference type="RefSeq" id="NP_001415425.1">
    <molecule id="Q60875-4"/>
    <property type="nucleotide sequence ID" value="NM_001428496.1"/>
</dbReference>
<dbReference type="RefSeq" id="NP_001415426.1">
    <molecule id="Q60875-5"/>
    <property type="nucleotide sequence ID" value="NM_001428497.1"/>
</dbReference>
<dbReference type="RefSeq" id="NP_032513.3">
    <molecule id="Q60875-1"/>
    <property type="nucleotide sequence ID" value="NM_008487.3"/>
</dbReference>
<dbReference type="RefSeq" id="XP_006501130.1">
    <property type="nucleotide sequence ID" value="XM_006501067.3"/>
</dbReference>
<dbReference type="PDB" id="5WI4">
    <property type="method" value="X-ray"/>
    <property type="resolution" value="2.00 A"/>
    <property type="chains" value="A/B/C=139-164"/>
</dbReference>
<dbReference type="PDBsum" id="5WI4"/>
<dbReference type="SMR" id="Q60875"/>
<dbReference type="BioGRID" id="201114">
    <property type="interactions" value="66"/>
</dbReference>
<dbReference type="FunCoup" id="Q60875">
    <property type="interactions" value="878"/>
</dbReference>
<dbReference type="IntAct" id="Q60875">
    <property type="interactions" value="20"/>
</dbReference>
<dbReference type="MINT" id="Q60875"/>
<dbReference type="STRING" id="10090.ENSMUSP00000029694"/>
<dbReference type="GlyGen" id="Q60875">
    <property type="glycosylation" value="3 sites, 2 N-linked glycans (2 sites), 1 O-linked glycan (1 site)"/>
</dbReference>
<dbReference type="iPTMnet" id="Q60875"/>
<dbReference type="PhosphoSitePlus" id="Q60875"/>
<dbReference type="SwissPalm" id="Q60875"/>
<dbReference type="jPOST" id="Q60875"/>
<dbReference type="PaxDb" id="10090-ENSMUSP00000029694"/>
<dbReference type="PeptideAtlas" id="Q60875"/>
<dbReference type="ProteomicsDB" id="283214">
    <molecule id="Q60875-1"/>
</dbReference>
<dbReference type="ProteomicsDB" id="283215">
    <molecule id="Q60875-2"/>
</dbReference>
<dbReference type="ProteomicsDB" id="283216">
    <molecule id="Q60875-3"/>
</dbReference>
<dbReference type="ProteomicsDB" id="283217">
    <molecule id="Q60875-4"/>
</dbReference>
<dbReference type="ProteomicsDB" id="283218">
    <molecule id="Q60875-5"/>
</dbReference>
<dbReference type="Pumba" id="Q60875"/>
<dbReference type="Antibodypedia" id="20425">
    <property type="antibodies" value="455 antibodies from 35 providers"/>
</dbReference>
<dbReference type="DNASU" id="16800"/>
<dbReference type="Ensembl" id="ENSMUST00000029694.14">
    <molecule id="Q60875-1"/>
    <property type="protein sequence ID" value="ENSMUSP00000029694.8"/>
    <property type="gene ID" value="ENSMUSG00000028059.17"/>
</dbReference>
<dbReference type="Ensembl" id="ENSMUST00000107510.10">
    <molecule id="Q60875-4"/>
    <property type="protein sequence ID" value="ENSMUSP00000103134.4"/>
    <property type="gene ID" value="ENSMUSG00000028059.17"/>
</dbReference>
<dbReference type="Ensembl" id="ENSMUST00000170653.9">
    <molecule id="Q60875-5"/>
    <property type="protein sequence ID" value="ENSMUSP00000127843.3"/>
    <property type="gene ID" value="ENSMUSG00000028059.17"/>
</dbReference>
<dbReference type="Ensembl" id="ENSMUST00000175911.8">
    <molecule id="Q60875-3"/>
    <property type="protein sequence ID" value="ENSMUSP00000135428.2"/>
    <property type="gene ID" value="ENSMUSG00000028059.17"/>
</dbReference>
<dbReference type="GeneID" id="16800"/>
<dbReference type="KEGG" id="mmu:16800"/>
<dbReference type="UCSC" id="uc008pvw.2">
    <molecule id="Q60875-1"/>
    <property type="organism name" value="mouse"/>
</dbReference>
<dbReference type="UCSC" id="uc008pvy.2">
    <molecule id="Q60875-5"/>
    <property type="organism name" value="mouse"/>
</dbReference>
<dbReference type="UCSC" id="uc008pwa.1">
    <molecule id="Q60875-3"/>
    <property type="organism name" value="mouse"/>
</dbReference>
<dbReference type="AGR" id="MGI:103264"/>
<dbReference type="CTD" id="9181"/>
<dbReference type="MGI" id="MGI:103264">
    <property type="gene designation" value="Arhgef2"/>
</dbReference>
<dbReference type="VEuPathDB" id="HostDB:ENSMUSG00000028059"/>
<dbReference type="eggNOG" id="KOG3520">
    <property type="taxonomic scope" value="Eukaryota"/>
</dbReference>
<dbReference type="GeneTree" id="ENSGT00940000158341"/>
<dbReference type="HOGENOM" id="CLU_002466_1_2_1"/>
<dbReference type="InParanoid" id="Q60875"/>
<dbReference type="OMA" id="ERMRKAY"/>
<dbReference type="PhylomeDB" id="Q60875"/>
<dbReference type="TreeFam" id="TF325887"/>
<dbReference type="Reactome" id="R-MMU-193648">
    <property type="pathway name" value="NRAGE signals death through JNK"/>
</dbReference>
<dbReference type="Reactome" id="R-MMU-416482">
    <property type="pathway name" value="G alpha (12/13) signalling events"/>
</dbReference>
<dbReference type="Reactome" id="R-MMU-8980692">
    <property type="pathway name" value="RHOA GTPase cycle"/>
</dbReference>
<dbReference type="Reactome" id="R-MMU-9013026">
    <property type="pathway name" value="RHOB GTPase cycle"/>
</dbReference>
<dbReference type="BioGRID-ORCS" id="16800">
    <property type="hits" value="2 hits in 76 CRISPR screens"/>
</dbReference>
<dbReference type="CD-CODE" id="CE726F99">
    <property type="entry name" value="Postsynaptic density"/>
</dbReference>
<dbReference type="ChiTaRS" id="Arhgef2">
    <property type="organism name" value="mouse"/>
</dbReference>
<dbReference type="PRO" id="PR:Q60875"/>
<dbReference type="Proteomes" id="UP000000589">
    <property type="component" value="Chromosome 3"/>
</dbReference>
<dbReference type="RNAct" id="Q60875">
    <property type="molecule type" value="protein"/>
</dbReference>
<dbReference type="Bgee" id="ENSMUSG00000028059">
    <property type="expression patterns" value="Expressed in spermatid and 241 other cell types or tissues"/>
</dbReference>
<dbReference type="ExpressionAtlas" id="Q60875">
    <property type="expression patterns" value="baseline and differential"/>
</dbReference>
<dbReference type="GO" id="GO:0005923">
    <property type="term" value="C:bicellular tight junction"/>
    <property type="evidence" value="ECO:0007669"/>
    <property type="project" value="UniProtKB-SubCell"/>
</dbReference>
<dbReference type="GO" id="GO:0005737">
    <property type="term" value="C:cytoplasm"/>
    <property type="evidence" value="ECO:0000250"/>
    <property type="project" value="UniProtKB"/>
</dbReference>
<dbReference type="GO" id="GO:0031410">
    <property type="term" value="C:cytoplasmic vesicle"/>
    <property type="evidence" value="ECO:0007669"/>
    <property type="project" value="UniProtKB-KW"/>
</dbReference>
<dbReference type="GO" id="GO:0005856">
    <property type="term" value="C:cytoskeleton"/>
    <property type="evidence" value="ECO:0000250"/>
    <property type="project" value="UniProtKB"/>
</dbReference>
<dbReference type="GO" id="GO:0043198">
    <property type="term" value="C:dendritic shaft"/>
    <property type="evidence" value="ECO:0000314"/>
    <property type="project" value="MGI"/>
</dbReference>
<dbReference type="GO" id="GO:0005794">
    <property type="term" value="C:Golgi apparatus"/>
    <property type="evidence" value="ECO:0007669"/>
    <property type="project" value="UniProtKB-SubCell"/>
</dbReference>
<dbReference type="GO" id="GO:0005874">
    <property type="term" value="C:microtubule"/>
    <property type="evidence" value="ECO:0000250"/>
    <property type="project" value="UniProtKB"/>
</dbReference>
<dbReference type="GO" id="GO:0043025">
    <property type="term" value="C:neuronal cell body"/>
    <property type="evidence" value="ECO:0000314"/>
    <property type="project" value="MGI"/>
</dbReference>
<dbReference type="GO" id="GO:0002102">
    <property type="term" value="C:podosome"/>
    <property type="evidence" value="ECO:0000314"/>
    <property type="project" value="MGI"/>
</dbReference>
<dbReference type="GO" id="GO:0014069">
    <property type="term" value="C:postsynaptic density"/>
    <property type="evidence" value="ECO:0000314"/>
    <property type="project" value="MGI"/>
</dbReference>
<dbReference type="GO" id="GO:0032991">
    <property type="term" value="C:protein-containing complex"/>
    <property type="evidence" value="ECO:0000250"/>
    <property type="project" value="UniProtKB"/>
</dbReference>
<dbReference type="GO" id="GO:0032587">
    <property type="term" value="C:ruffle membrane"/>
    <property type="evidence" value="ECO:0000250"/>
    <property type="project" value="UniProtKB"/>
</dbReference>
<dbReference type="GO" id="GO:0005819">
    <property type="term" value="C:spindle"/>
    <property type="evidence" value="ECO:0007669"/>
    <property type="project" value="UniProtKB-SubCell"/>
</dbReference>
<dbReference type="GO" id="GO:0031982">
    <property type="term" value="C:vesicle"/>
    <property type="evidence" value="ECO:0000250"/>
    <property type="project" value="UniProtKB"/>
</dbReference>
<dbReference type="GO" id="GO:0005085">
    <property type="term" value="F:guanyl-nucleotide exchange factor activity"/>
    <property type="evidence" value="ECO:0000314"/>
    <property type="project" value="MGI"/>
</dbReference>
<dbReference type="GO" id="GO:0008017">
    <property type="term" value="F:microtubule binding"/>
    <property type="evidence" value="ECO:0000314"/>
    <property type="project" value="MGI"/>
</dbReference>
<dbReference type="GO" id="GO:0031267">
    <property type="term" value="F:small GTPase binding"/>
    <property type="evidence" value="ECO:0000250"/>
    <property type="project" value="UniProtKB"/>
</dbReference>
<dbReference type="GO" id="GO:0008270">
    <property type="term" value="F:zinc ion binding"/>
    <property type="evidence" value="ECO:0007669"/>
    <property type="project" value="UniProtKB-KW"/>
</dbReference>
<dbReference type="GO" id="GO:0007015">
    <property type="term" value="P:actin filament organization"/>
    <property type="evidence" value="ECO:0000353"/>
    <property type="project" value="MGI"/>
</dbReference>
<dbReference type="GO" id="GO:0055059">
    <property type="term" value="P:asymmetric neuroblast division"/>
    <property type="evidence" value="ECO:0000315"/>
    <property type="project" value="UniProtKB"/>
</dbReference>
<dbReference type="GO" id="GO:0000902">
    <property type="term" value="P:cell morphogenesis"/>
    <property type="evidence" value="ECO:0000314"/>
    <property type="project" value="MGI"/>
</dbReference>
<dbReference type="GO" id="GO:0071225">
    <property type="term" value="P:cellular response to muramyl dipeptide"/>
    <property type="evidence" value="ECO:0000250"/>
    <property type="project" value="UniProtKB"/>
</dbReference>
<dbReference type="GO" id="GO:0000132">
    <property type="term" value="P:establishment of mitotic spindle orientation"/>
    <property type="evidence" value="ECO:0000315"/>
    <property type="project" value="UniProtKB"/>
</dbReference>
<dbReference type="GO" id="GO:0045087">
    <property type="term" value="P:innate immune response"/>
    <property type="evidence" value="ECO:0007669"/>
    <property type="project" value="UniProtKB-KW"/>
</dbReference>
<dbReference type="GO" id="GO:0007026">
    <property type="term" value="P:negative regulation of microtubule depolymerization"/>
    <property type="evidence" value="ECO:0000250"/>
    <property type="project" value="UniProtKB"/>
</dbReference>
<dbReference type="GO" id="GO:0050768">
    <property type="term" value="P:negative regulation of neurogenesis"/>
    <property type="evidence" value="ECO:0000315"/>
    <property type="project" value="UniProtKB"/>
</dbReference>
<dbReference type="GO" id="GO:0071802">
    <property type="term" value="P:negative regulation of podosome assembly"/>
    <property type="evidence" value="ECO:0000315"/>
    <property type="project" value="MGI"/>
</dbReference>
<dbReference type="GO" id="GO:0032755">
    <property type="term" value="P:positive regulation of interleukin-6 production"/>
    <property type="evidence" value="ECO:0000250"/>
    <property type="project" value="UniProtKB"/>
</dbReference>
<dbReference type="GO" id="GO:0045666">
    <property type="term" value="P:positive regulation of neuron differentiation"/>
    <property type="evidence" value="ECO:0000315"/>
    <property type="project" value="UniProtKB"/>
</dbReference>
<dbReference type="GO" id="GO:2001224">
    <property type="term" value="P:positive regulation of neuron migration"/>
    <property type="evidence" value="ECO:0000315"/>
    <property type="project" value="UniProtKB"/>
</dbReference>
<dbReference type="GO" id="GO:0051092">
    <property type="term" value="P:positive regulation of NF-kappaB transcription factor activity"/>
    <property type="evidence" value="ECO:0000250"/>
    <property type="project" value="UniProtKB"/>
</dbReference>
<dbReference type="GO" id="GO:0050731">
    <property type="term" value="P:positive regulation of peptidyl-tyrosine phosphorylation"/>
    <property type="evidence" value="ECO:0000250"/>
    <property type="project" value="UniProtKB"/>
</dbReference>
<dbReference type="GO" id="GO:0045944">
    <property type="term" value="P:positive regulation of transcription by RNA polymerase II"/>
    <property type="evidence" value="ECO:0000250"/>
    <property type="project" value="UniProtKB"/>
</dbReference>
<dbReference type="GO" id="GO:0032760">
    <property type="term" value="P:positive regulation of tumor necrosis factor production"/>
    <property type="evidence" value="ECO:0000250"/>
    <property type="project" value="UniProtKB"/>
</dbReference>
<dbReference type="GO" id="GO:0035023">
    <property type="term" value="P:regulation of Rho protein signal transduction"/>
    <property type="evidence" value="ECO:0000314"/>
    <property type="project" value="MGI"/>
</dbReference>
<dbReference type="CDD" id="cd20877">
    <property type="entry name" value="C1_ARHGEF2"/>
    <property type="match status" value="1"/>
</dbReference>
<dbReference type="CDD" id="cd13393">
    <property type="entry name" value="PH_ARHGEF2"/>
    <property type="match status" value="1"/>
</dbReference>
<dbReference type="CDD" id="cd00160">
    <property type="entry name" value="RhoGEF"/>
    <property type="match status" value="1"/>
</dbReference>
<dbReference type="FunFam" id="1.20.900.10:FF:000004">
    <property type="entry name" value="Rho guanine nucleotide exchange factor 2"/>
    <property type="match status" value="1"/>
</dbReference>
<dbReference type="FunFam" id="2.30.29.30:FF:000021">
    <property type="entry name" value="Rho guanine nucleotide exchange factor 2"/>
    <property type="match status" value="1"/>
</dbReference>
<dbReference type="FunFam" id="3.30.60.20:FF:000032">
    <property type="entry name" value="rho guanine nucleotide exchange factor 2 isoform X2"/>
    <property type="match status" value="1"/>
</dbReference>
<dbReference type="Gene3D" id="3.30.60.20">
    <property type="match status" value="1"/>
</dbReference>
<dbReference type="Gene3D" id="1.20.900.10">
    <property type="entry name" value="Dbl homology (DH) domain"/>
    <property type="match status" value="1"/>
</dbReference>
<dbReference type="Gene3D" id="2.30.29.30">
    <property type="entry name" value="Pleckstrin-homology domain (PH domain)/Phosphotyrosine-binding domain (PTB)"/>
    <property type="match status" value="1"/>
</dbReference>
<dbReference type="InterPro" id="IPR037806">
    <property type="entry name" value="ARHGEF2_PH"/>
</dbReference>
<dbReference type="InterPro" id="IPR046349">
    <property type="entry name" value="C1-like_sf"/>
</dbReference>
<dbReference type="InterPro" id="IPR035899">
    <property type="entry name" value="DBL_dom_sf"/>
</dbReference>
<dbReference type="InterPro" id="IPR000219">
    <property type="entry name" value="DH_dom"/>
</dbReference>
<dbReference type="InterPro" id="IPR002219">
    <property type="entry name" value="PE/DAG-bd"/>
</dbReference>
<dbReference type="InterPro" id="IPR011993">
    <property type="entry name" value="PH-like_dom_sf"/>
</dbReference>
<dbReference type="InterPro" id="IPR041020">
    <property type="entry name" value="PH_16"/>
</dbReference>
<dbReference type="InterPro" id="IPR001849">
    <property type="entry name" value="PH_domain"/>
</dbReference>
<dbReference type="InterPro" id="IPR051632">
    <property type="entry name" value="Rho_GEF"/>
</dbReference>
<dbReference type="PANTHER" id="PTHR13944">
    <property type="entry name" value="AGAP007712-PA"/>
    <property type="match status" value="1"/>
</dbReference>
<dbReference type="PANTHER" id="PTHR13944:SF20">
    <property type="entry name" value="RHO GUANINE NUCLEOTIDE EXCHANGE FACTOR 2"/>
    <property type="match status" value="1"/>
</dbReference>
<dbReference type="Pfam" id="PF17838">
    <property type="entry name" value="PH_16"/>
    <property type="match status" value="1"/>
</dbReference>
<dbReference type="Pfam" id="PF00621">
    <property type="entry name" value="RhoGEF"/>
    <property type="match status" value="1"/>
</dbReference>
<dbReference type="SMART" id="SM00109">
    <property type="entry name" value="C1"/>
    <property type="match status" value="1"/>
</dbReference>
<dbReference type="SMART" id="SM00233">
    <property type="entry name" value="PH"/>
    <property type="match status" value="1"/>
</dbReference>
<dbReference type="SMART" id="SM00325">
    <property type="entry name" value="RhoGEF"/>
    <property type="match status" value="1"/>
</dbReference>
<dbReference type="SUPFAM" id="SSF57889">
    <property type="entry name" value="Cysteine-rich domain"/>
    <property type="match status" value="1"/>
</dbReference>
<dbReference type="SUPFAM" id="SSF48065">
    <property type="entry name" value="DBL homology domain (DH-domain)"/>
    <property type="match status" value="1"/>
</dbReference>
<dbReference type="SUPFAM" id="SSF50729">
    <property type="entry name" value="PH domain-like"/>
    <property type="match status" value="1"/>
</dbReference>
<dbReference type="PROSITE" id="PS50010">
    <property type="entry name" value="DH_2"/>
    <property type="match status" value="1"/>
</dbReference>
<dbReference type="PROSITE" id="PS50003">
    <property type="entry name" value="PH_DOMAIN"/>
    <property type="match status" value="1"/>
</dbReference>
<dbReference type="PROSITE" id="PS00479">
    <property type="entry name" value="ZF_DAG_PE_1"/>
    <property type="match status" value="1"/>
</dbReference>
<dbReference type="PROSITE" id="PS50081">
    <property type="entry name" value="ZF_DAG_PE_2"/>
    <property type="match status" value="1"/>
</dbReference>
<keyword id="KW-0002">3D-structure</keyword>
<keyword id="KW-0007">Acetylation</keyword>
<keyword id="KW-0025">Alternative splicing</keyword>
<keyword id="KW-0131">Cell cycle</keyword>
<keyword id="KW-0132">Cell division</keyword>
<keyword id="KW-0965">Cell junction</keyword>
<keyword id="KW-0175">Coiled coil</keyword>
<keyword id="KW-0963">Cytoplasm</keyword>
<keyword id="KW-0968">Cytoplasmic vesicle</keyword>
<keyword id="KW-0206">Cytoskeleton</keyword>
<keyword id="KW-0217">Developmental protein</keyword>
<keyword id="KW-0221">Differentiation</keyword>
<keyword id="KW-0333">Golgi apparatus</keyword>
<keyword id="KW-0344">Guanine-nucleotide releasing factor</keyword>
<keyword id="KW-0391">Immunity</keyword>
<keyword id="KW-0399">Innate immunity</keyword>
<keyword id="KW-0479">Metal-binding</keyword>
<keyword id="KW-0493">Microtubule</keyword>
<keyword id="KW-0498">Mitosis</keyword>
<keyword id="KW-0524">Neurogenesis</keyword>
<keyword id="KW-0597">Phosphoprotein</keyword>
<keyword id="KW-0656">Proto-oncogene</keyword>
<keyword id="KW-1185">Reference proteome</keyword>
<keyword id="KW-0796">Tight junction</keyword>
<keyword id="KW-0862">Zinc</keyword>
<keyword id="KW-0863">Zinc-finger</keyword>
<name>ARHG2_MOUSE</name>
<evidence type="ECO:0000250" key="1"/>
<evidence type="ECO:0000250" key="2">
    <source>
        <dbReference type="UniProtKB" id="Q865S3"/>
    </source>
</evidence>
<evidence type="ECO:0000250" key="3">
    <source>
        <dbReference type="UniProtKB" id="Q92974"/>
    </source>
</evidence>
<evidence type="ECO:0000255" key="4"/>
<evidence type="ECO:0000255" key="5">
    <source>
        <dbReference type="PROSITE-ProRule" id="PRU00062"/>
    </source>
</evidence>
<evidence type="ECO:0000255" key="6">
    <source>
        <dbReference type="PROSITE-ProRule" id="PRU00145"/>
    </source>
</evidence>
<evidence type="ECO:0000255" key="7">
    <source>
        <dbReference type="PROSITE-ProRule" id="PRU00226"/>
    </source>
</evidence>
<evidence type="ECO:0000256" key="8">
    <source>
        <dbReference type="SAM" id="MobiDB-lite"/>
    </source>
</evidence>
<evidence type="ECO:0000269" key="9">
    <source>
    </source>
</evidence>
<evidence type="ECO:0000269" key="10">
    <source>
    </source>
</evidence>
<evidence type="ECO:0000269" key="11">
    <source>
    </source>
</evidence>
<evidence type="ECO:0000303" key="12">
    <source>
    </source>
</evidence>
<evidence type="ECO:0000303" key="13">
    <source>
    </source>
</evidence>
<evidence type="ECO:0000303" key="14">
    <source>
    </source>
</evidence>
<evidence type="ECO:0000303" key="15">
    <source ref="2"/>
</evidence>
<evidence type="ECO:0000305" key="16"/>
<evidence type="ECO:0007744" key="17">
    <source>
    </source>
</evidence>
<evidence type="ECO:0007744" key="18">
    <source>
    </source>
</evidence>
<evidence type="ECO:0007744" key="19">
    <source>
    </source>
</evidence>
<evidence type="ECO:0007744" key="20">
    <source>
    </source>
</evidence>
<evidence type="ECO:0007829" key="21">
    <source>
        <dbReference type="PDB" id="5WI4"/>
    </source>
</evidence>
<sequence length="985" mass="111974">MSRIESLTRARIDRSKEQATKTREKEKMKEAKDARYTNGHLFTTISVSGMTMCYACNKSITAKEALICPTCNVTIHNRCKDTLANCTKVKQKQQKAALLRNNTALQSVSLRSKTTTRERPTSAIYPSDSFRQSLLGSRRGLSSLSLAKSVSTTNIAGHFNDESPLGLRQILSQSTDSLNMRNRTLSVESLIDEGVEVFYNELMSDFEMDEKDFEADSWSLAVDSSFLQQHKKEVMKKQDVIYELIQTELHHVRTLKIMTRLFRTGMLEELQMEPEVVQGLFPCVDELSDIHTRFLNQLLERRRQALCPGSTRNFVIHRLGDLLISQFSGSNAEQMRKTYSEFCSRHTKALKLYKELYARDKRFQQFIRKMTRSAVLKRHGVQECILLVTQRITKYPVLINRILQNSHGVEEEYQDLASALGLVKELLSNVDQDVHELEKEARLQEIYNRMDPRAQTPVPGKGPFGRDELLRRKLIHEGCLLWKTATGRFKDVLLLLMTDVLVFLQEKDQKYIFTSLDKPSVVSLQNLIVRDIANQAKGMFLISSGPPEMYEVHAASRDDRTTWIRVIQQSVRLCPSREDFPLIETEDKAYLRRIKTKLQQKNQALVELLQKNVELFAEMVHFQALKAGFVGMPPPALPRGLFRLESFESLRGERLLKDALREVEGLKDLLLGPCVDLPMTSREPALPLDSDSGSCPGVTANGEARTFNGSIELCRADSDSSQKDRNGNQLRSPQEEVLQPLINLYGLLHGLQAVVVQQERLMEALFPEGPERWEKLSRANSRDGEAGRAAVASVTPEKQATELALLQRQHTLLQEELRRCQRLGEERATEAGSLEARLRESEQARALLEREAEEIRRQLAALGQNEPLPAEAPWARRPLDPRRRSLPAGDALYLSFNPPQPSRGHDRLDLPVTVRSLHRPFDDREAQELGSPEDRLQDSSDPDTGSEEEVSSRLSPPHSPRDFTRMQDIPEETESRDGEPTASES</sequence>
<gene>
    <name type="primary">Arhgef2</name>
    <name type="synonym">Kiaa0651</name>
    <name type="synonym">Lbcl1</name>
    <name type="synonym">Lfc</name>
</gene>
<organism>
    <name type="scientific">Mus musculus</name>
    <name type="common">Mouse</name>
    <dbReference type="NCBI Taxonomy" id="10090"/>
    <lineage>
        <taxon>Eukaryota</taxon>
        <taxon>Metazoa</taxon>
        <taxon>Chordata</taxon>
        <taxon>Craniata</taxon>
        <taxon>Vertebrata</taxon>
        <taxon>Euteleostomi</taxon>
        <taxon>Mammalia</taxon>
        <taxon>Eutheria</taxon>
        <taxon>Euarchontoglires</taxon>
        <taxon>Glires</taxon>
        <taxon>Rodentia</taxon>
        <taxon>Myomorpha</taxon>
        <taxon>Muroidea</taxon>
        <taxon>Muridae</taxon>
        <taxon>Murinae</taxon>
        <taxon>Mus</taxon>
        <taxon>Mus</taxon>
    </lineage>
</organism>
<accession>Q60875</accession>
<accession>E9QNW9</accession>
<accession>O09115</accession>
<accession>Q3TBI4</accession>
<accession>Q3TJ16</accession>
<accession>Q8CHE1</accession>
<accession>Q923E0</accession>
<accession>Q9ESG7</accession>
<comment type="function">
    <text evidence="2 3 11">Activates Rho-GTPases by promoting the exchange of GDP for GTP. May be involved in epithelial barrier permeability, cell motility and polarization, dendritic spine morphology, antigen presentation, leukemic cell differentiation, cell cycle regulation, innate immune response, and cancer. Binds Rac-GTPases, but does not seem to promote nucleotide exchange activity toward Rac-GTPases. May stimulate instead the cortical activity of Rac. Inactive toward CDC42, TC10, or Ras-GTPases. Forms an intracellular sensing system along with NOD1 for the detection of microbial effectors during cell invasion by pathogens. Involved in innate immune signaling transduction pathway promoting cytokine IL6/interleukin-6 and TNF-alpha secretion in macrophage upon stimulation by bacterial peptidoglycans; acts as a signaling intermediate between NOD2 receptor and RIPK2 kinase. Contributes to the tyrosine phosphorylation of RIPK2 through Src tyrosine kinase leading to NF-kappaB activation by NOD2. Overexpression activates Rho-, but not Rac-GTPases, and increases paracellular permeability (By similarity). Involved in neuronal progenitor cell division and differentiation (PubMed:28453519). Involved in the migration of precerebellar neurons (PubMed:28453519).</text>
</comment>
<comment type="subunit">
    <text evidence="1 2 10">Found in a complex composed at least of ARHGEF2, NOD2 and RIPK2. Interacts with RIPK2; the interaction mediates tyrosine phosphorylation of RIPK2 by Src kinase CSK. Interacts with RIPK1 and RIPK3. Interacts with YWHAZ/14-3-3 zeta; when phosphorylated at Ser-885. Interacts with the kinases PAK4, AURKA and MAPK1. Interacts with RHOA and RAC1. Interacts with NOD1 (By similarity). Interacts (via the N- terminal zinc finger) with CAPN6 (via domain II). Interacts with DYNLT1.</text>
</comment>
<comment type="interaction">
    <interactant intactId="EBI-772191">
        <id>Q60875</id>
    </interactant>
    <interactant intactId="EBI-54453184">
        <id>Q4QRL3</id>
        <label>Ccdc88b</label>
    </interactant>
    <organismsDiffer>false</organismsDiffer>
    <experiments>6</experiments>
</comment>
<comment type="interaction">
    <interactant intactId="EBI-772191">
        <id>Q60875</id>
    </interactant>
    <interactant intactId="EBI-1536336">
        <id>Q61097</id>
        <label>Ksr1</label>
    </interactant>
    <organismsDiffer>false</organismsDiffer>
    <experiments>5</experiments>
</comment>
<comment type="subcellular location">
    <subcellularLocation>
        <location evidence="2 3">Cytoplasm</location>
        <location evidence="2 3">Cytoskeleton</location>
    </subcellularLocation>
    <subcellularLocation>
        <location evidence="2 3">Cytoplasm</location>
    </subcellularLocation>
    <subcellularLocation>
        <location evidence="9">Cell junction</location>
        <location evidence="9">Tight junction</location>
    </subcellularLocation>
    <subcellularLocation>
        <location evidence="3">Golgi apparatus</location>
    </subcellularLocation>
    <subcellularLocation>
        <location evidence="2 3">Cytoplasm</location>
        <location evidence="2 3">Cytoskeleton</location>
        <location evidence="2 3">Spindle</location>
    </subcellularLocation>
    <subcellularLocation>
        <location evidence="3">Cytoplasmic vesicle</location>
    </subcellularLocation>
    <text evidence="3 9">Localizes to the tips of cortical microtubules of the mitotic spindle during cell division, and is further released upon microtubule depolymerization (By similarity). Colocalized with NOD2 and RIPK2 in vesicles and with the cytoskeleton (By similarity). Associated with apical intercellular junctions in the trophectoderm of the blastocyst (PubMed:12604587).</text>
</comment>
<comment type="alternative products">
    <event type="alternative splicing"/>
    <isoform>
        <id>Q60875-1</id>
        <name>1</name>
        <sequence type="displayed"/>
    </isoform>
    <isoform>
        <id>Q60875-2</id>
        <name>2</name>
        <sequence type="described" ref="VSP_022641"/>
    </isoform>
    <isoform>
        <id>Q60875-3</id>
        <name>3</name>
        <sequence type="described" ref="VSP_022640 VSP_022642 VSP_022643"/>
    </isoform>
    <isoform>
        <id>Q60875-4</id>
        <name>4</name>
        <sequence type="described" ref="VSP_034962"/>
    </isoform>
    <isoform>
        <id>Q60875-5</id>
        <name>5</name>
        <sequence type="described" ref="VSP_034962 VSP_034963"/>
    </isoform>
</comment>
<comment type="tissue specificity">
    <text evidence="11">Ubiquitous, with the exception of liver tissue. Levels are high in hemopoietic tissues (thymus, spleen, bone marrow) as well as in kidney and lung. Expressed in the germinal zones of both the neocortex and the cerebellum and in the pontine gray nuclei (PubMed:28453519).</text>
</comment>
<comment type="developmental stage">
    <text evidence="11">Expressed in the neuroepithelium of telencephalon, diencephalon and rhombencephalon at 11 dpc (PubMed:28453519).</text>
</comment>
<comment type="domain">
    <text evidence="1">The DH (DBL-homology) domain promotes tyrosine phosphorylation of RIPK2 (By similarity). The DH (DBL-homology) domain interacts with and promotes loading of GTP on RhoA.</text>
</comment>
<comment type="domain">
    <text evidence="3">The PH domain has no affinity for phosphoinositides suggesting that it does not interact directly with membranes.</text>
</comment>
<comment type="domain">
    <text evidence="3">The phorbol-ester/DAG-type zinc-finger and the C-terminal coiled-coil domains (606-986) are both important for association with microtubules.</text>
</comment>
<comment type="PTM">
    <text evidence="1">Phosphorylation of Ser-885 by PAK1 induces binding to protein YWHAZ, promoting its relocation to microtubules and the inhibition of its activity. Phosphorylated by AURKA and CDK1 during mitosis, which negatively regulates its activity. Phosphorylation by MAPK1 or MAPK3 increases nucleotide exchange activity. Phosphorylation by PAK4 releases GEF-H1 from the microtubules. Phosphorylated on serine, threonine and tyrosine residues in a RIPK2-dependent manner (By similarity).</text>
</comment>
<comment type="disruption phenotype">
    <text evidence="11">Mice show reduced volume of the total brain, the cerebellum and the brainstem. Show complete lack of precerebellar pontin gray and reticulotegmental nuclei. Show impaired precerebellar neuron migration.</text>
</comment>
<comment type="sequence caution" evidence="16">
    <conflict type="erroneous initiation">
        <sequence resource="EMBL-CDS" id="BAC41438"/>
    </conflict>
    <text>Extended N-terminus.</text>
</comment>
<proteinExistence type="evidence at protein level"/>
<protein>
    <recommendedName>
        <fullName>Rho guanine nucleotide exchange factor 2</fullName>
    </recommendedName>
    <alternativeName>
        <fullName>Guanine nucleotide exchange factor H1</fullName>
        <shortName>GEF-H1</shortName>
    </alternativeName>
    <alternativeName>
        <fullName>LBC'S first cousin</fullName>
    </alternativeName>
    <alternativeName>
        <fullName>Lymphoid blast crisis-like 1</fullName>
    </alternativeName>
    <alternativeName>
        <fullName>Oncogene LFC</fullName>
    </alternativeName>
    <alternativeName>
        <fullName>Rhobin</fullName>
    </alternativeName>
</protein>
<reference key="1">
    <citation type="journal article" date="1995" name="J. Biol. Chem.">
        <title>Expression cloning of lfc, a novel oncogene with structural similarities to guanine nucleotide exchange factors and to the regulatory region of protein kinase C.</title>
        <authorList>
            <person name="Whitehead I."/>
            <person name="Kirk H."/>
            <person name="Tognon C."/>
            <person name="Trigo-Gonzalez G."/>
            <person name="Kay R."/>
        </authorList>
    </citation>
    <scope>NUCLEOTIDE SEQUENCE [MRNA] (ISOFORM 2)</scope>
    <source>
        <tissue>Myeloid</tissue>
    </source>
</reference>
<reference key="2">
    <citation type="submission" date="1997-01" db="EMBL/GenBank/DDBJ databases">
        <authorList>
            <person name="Olofsson B."/>
        </authorList>
    </citation>
    <scope>NUCLEOTIDE SEQUENCE [MRNA] (ISOFORM 3)</scope>
    <source>
        <strain>BALB/cJ</strain>
    </source>
</reference>
<reference key="3">
    <citation type="submission" date="1999-08" db="EMBL/GenBank/DDBJ databases">
        <authorList>
            <person name="De Sepulveda P."/>
            <person name="Rottapel R."/>
        </authorList>
    </citation>
    <scope>NUCLEOTIDE SEQUENCE [MRNA] (ISOFORM 1)</scope>
</reference>
<reference key="4">
    <citation type="journal article" date="2002" name="DNA Res.">
        <title>Prediction of the coding sequences of mouse homologues of KIAA gene: I. The complete nucleotide sequences of 100 mouse KIAA-homologous cDNAs identified by screening of terminal sequences of cDNA clones randomly sampled from size-fractionated libraries.</title>
        <authorList>
            <person name="Okazaki N."/>
            <person name="Kikuno R."/>
            <person name="Ohara R."/>
            <person name="Inamoto S."/>
            <person name="Hara Y."/>
            <person name="Nagase T."/>
            <person name="Ohara O."/>
            <person name="Koga H."/>
        </authorList>
    </citation>
    <scope>NUCLEOTIDE SEQUENCE [LARGE SCALE MRNA] (ISOFORM 4)</scope>
    <source>
        <tissue>Brain</tissue>
    </source>
</reference>
<reference key="5">
    <citation type="journal article" date="2005" name="Science">
        <title>The transcriptional landscape of the mammalian genome.</title>
        <authorList>
            <person name="Carninci P."/>
            <person name="Kasukawa T."/>
            <person name="Katayama S."/>
            <person name="Gough J."/>
            <person name="Frith M.C."/>
            <person name="Maeda N."/>
            <person name="Oyama R."/>
            <person name="Ravasi T."/>
            <person name="Lenhard B."/>
            <person name="Wells C."/>
            <person name="Kodzius R."/>
            <person name="Shimokawa K."/>
            <person name="Bajic V.B."/>
            <person name="Brenner S.E."/>
            <person name="Batalov S."/>
            <person name="Forrest A.R."/>
            <person name="Zavolan M."/>
            <person name="Davis M.J."/>
            <person name="Wilming L.G."/>
            <person name="Aidinis V."/>
            <person name="Allen J.E."/>
            <person name="Ambesi-Impiombato A."/>
            <person name="Apweiler R."/>
            <person name="Aturaliya R.N."/>
            <person name="Bailey T.L."/>
            <person name="Bansal M."/>
            <person name="Baxter L."/>
            <person name="Beisel K.W."/>
            <person name="Bersano T."/>
            <person name="Bono H."/>
            <person name="Chalk A.M."/>
            <person name="Chiu K.P."/>
            <person name="Choudhary V."/>
            <person name="Christoffels A."/>
            <person name="Clutterbuck D.R."/>
            <person name="Crowe M.L."/>
            <person name="Dalla E."/>
            <person name="Dalrymple B.P."/>
            <person name="de Bono B."/>
            <person name="Della Gatta G."/>
            <person name="di Bernardo D."/>
            <person name="Down T."/>
            <person name="Engstrom P."/>
            <person name="Fagiolini M."/>
            <person name="Faulkner G."/>
            <person name="Fletcher C.F."/>
            <person name="Fukushima T."/>
            <person name="Furuno M."/>
            <person name="Futaki S."/>
            <person name="Gariboldi M."/>
            <person name="Georgii-Hemming P."/>
            <person name="Gingeras T.R."/>
            <person name="Gojobori T."/>
            <person name="Green R.E."/>
            <person name="Gustincich S."/>
            <person name="Harbers M."/>
            <person name="Hayashi Y."/>
            <person name="Hensch T.K."/>
            <person name="Hirokawa N."/>
            <person name="Hill D."/>
            <person name="Huminiecki L."/>
            <person name="Iacono M."/>
            <person name="Ikeo K."/>
            <person name="Iwama A."/>
            <person name="Ishikawa T."/>
            <person name="Jakt M."/>
            <person name="Kanapin A."/>
            <person name="Katoh M."/>
            <person name="Kawasawa Y."/>
            <person name="Kelso J."/>
            <person name="Kitamura H."/>
            <person name="Kitano H."/>
            <person name="Kollias G."/>
            <person name="Krishnan S.P."/>
            <person name="Kruger A."/>
            <person name="Kummerfeld S.K."/>
            <person name="Kurochkin I.V."/>
            <person name="Lareau L.F."/>
            <person name="Lazarevic D."/>
            <person name="Lipovich L."/>
            <person name="Liu J."/>
            <person name="Liuni S."/>
            <person name="McWilliam S."/>
            <person name="Madan Babu M."/>
            <person name="Madera M."/>
            <person name="Marchionni L."/>
            <person name="Matsuda H."/>
            <person name="Matsuzawa S."/>
            <person name="Miki H."/>
            <person name="Mignone F."/>
            <person name="Miyake S."/>
            <person name="Morris K."/>
            <person name="Mottagui-Tabar S."/>
            <person name="Mulder N."/>
            <person name="Nakano N."/>
            <person name="Nakauchi H."/>
            <person name="Ng P."/>
            <person name="Nilsson R."/>
            <person name="Nishiguchi S."/>
            <person name="Nishikawa S."/>
            <person name="Nori F."/>
            <person name="Ohara O."/>
            <person name="Okazaki Y."/>
            <person name="Orlando V."/>
            <person name="Pang K.C."/>
            <person name="Pavan W.J."/>
            <person name="Pavesi G."/>
            <person name="Pesole G."/>
            <person name="Petrovsky N."/>
            <person name="Piazza S."/>
            <person name="Reed J."/>
            <person name="Reid J.F."/>
            <person name="Ring B.Z."/>
            <person name="Ringwald M."/>
            <person name="Rost B."/>
            <person name="Ruan Y."/>
            <person name="Salzberg S.L."/>
            <person name="Sandelin A."/>
            <person name="Schneider C."/>
            <person name="Schoenbach C."/>
            <person name="Sekiguchi K."/>
            <person name="Semple C.A."/>
            <person name="Seno S."/>
            <person name="Sessa L."/>
            <person name="Sheng Y."/>
            <person name="Shibata Y."/>
            <person name="Shimada H."/>
            <person name="Shimada K."/>
            <person name="Silva D."/>
            <person name="Sinclair B."/>
            <person name="Sperling S."/>
            <person name="Stupka E."/>
            <person name="Sugiura K."/>
            <person name="Sultana R."/>
            <person name="Takenaka Y."/>
            <person name="Taki K."/>
            <person name="Tammoja K."/>
            <person name="Tan S.L."/>
            <person name="Tang S."/>
            <person name="Taylor M.S."/>
            <person name="Tegner J."/>
            <person name="Teichmann S.A."/>
            <person name="Ueda H.R."/>
            <person name="van Nimwegen E."/>
            <person name="Verardo R."/>
            <person name="Wei C.L."/>
            <person name="Yagi K."/>
            <person name="Yamanishi H."/>
            <person name="Zabarovsky E."/>
            <person name="Zhu S."/>
            <person name="Zimmer A."/>
            <person name="Hide W."/>
            <person name="Bult C."/>
            <person name="Grimmond S.M."/>
            <person name="Teasdale R.D."/>
            <person name="Liu E.T."/>
            <person name="Brusic V."/>
            <person name="Quackenbush J."/>
            <person name="Wahlestedt C."/>
            <person name="Mattick J.S."/>
            <person name="Hume D.A."/>
            <person name="Kai C."/>
            <person name="Sasaki D."/>
            <person name="Tomaru Y."/>
            <person name="Fukuda S."/>
            <person name="Kanamori-Katayama M."/>
            <person name="Suzuki M."/>
            <person name="Aoki J."/>
            <person name="Arakawa T."/>
            <person name="Iida J."/>
            <person name="Imamura K."/>
            <person name="Itoh M."/>
            <person name="Kato T."/>
            <person name="Kawaji H."/>
            <person name="Kawagashira N."/>
            <person name="Kawashima T."/>
            <person name="Kojima M."/>
            <person name="Kondo S."/>
            <person name="Konno H."/>
            <person name="Nakano K."/>
            <person name="Ninomiya N."/>
            <person name="Nishio T."/>
            <person name="Okada M."/>
            <person name="Plessy C."/>
            <person name="Shibata K."/>
            <person name="Shiraki T."/>
            <person name="Suzuki S."/>
            <person name="Tagami M."/>
            <person name="Waki K."/>
            <person name="Watahiki A."/>
            <person name="Okamura-Oho Y."/>
            <person name="Suzuki H."/>
            <person name="Kawai J."/>
            <person name="Hayashizaki Y."/>
        </authorList>
    </citation>
    <scope>NUCLEOTIDE SEQUENCE [LARGE SCALE MRNA] (ISOFORMS 4 AND 5)</scope>
    <source>
        <strain>C57BL/6J</strain>
        <strain>NOD</strain>
        <tissue>Dendritic cell</tissue>
        <tissue>Liver</tissue>
    </source>
</reference>
<reference key="6">
    <citation type="journal article" date="2009" name="PLoS Biol.">
        <title>Lineage-specific biology revealed by a finished genome assembly of the mouse.</title>
        <authorList>
            <person name="Church D.M."/>
            <person name="Goodstadt L."/>
            <person name="Hillier L.W."/>
            <person name="Zody M.C."/>
            <person name="Goldstein S."/>
            <person name="She X."/>
            <person name="Bult C.J."/>
            <person name="Agarwala R."/>
            <person name="Cherry J.L."/>
            <person name="DiCuccio M."/>
            <person name="Hlavina W."/>
            <person name="Kapustin Y."/>
            <person name="Meric P."/>
            <person name="Maglott D."/>
            <person name="Birtle Z."/>
            <person name="Marques A.C."/>
            <person name="Graves T."/>
            <person name="Zhou S."/>
            <person name="Teague B."/>
            <person name="Potamousis K."/>
            <person name="Churas C."/>
            <person name="Place M."/>
            <person name="Herschleb J."/>
            <person name="Runnheim R."/>
            <person name="Forrest D."/>
            <person name="Amos-Landgraf J."/>
            <person name="Schwartz D.C."/>
            <person name="Cheng Z."/>
            <person name="Lindblad-Toh K."/>
            <person name="Eichler E.E."/>
            <person name="Ponting C.P."/>
        </authorList>
    </citation>
    <scope>NUCLEOTIDE SEQUENCE [LARGE SCALE GENOMIC DNA]</scope>
    <source>
        <strain>C57BL/6J</strain>
    </source>
</reference>
<reference key="7">
    <citation type="journal article" date="2004" name="Genome Res.">
        <title>The status, quality, and expansion of the NIH full-length cDNA project: the Mammalian Gene Collection (MGC).</title>
        <authorList>
            <consortium name="The MGC Project Team"/>
        </authorList>
    </citation>
    <scope>NUCLEOTIDE SEQUENCE [LARGE SCALE MRNA] (ISOFORM 1)</scope>
    <source>
        <strain>Czech II</strain>
        <tissue>Mammary gland</tissue>
    </source>
</reference>
<reference key="8">
    <citation type="journal article" date="2003" name="J. Cell Biol.">
        <title>Identification of a tight junction-associated guanine nucleotide exchange factor that activates Rho and regulates paracellular permeability.</title>
        <authorList>
            <person name="Benais-Pont G."/>
            <person name="Punn A."/>
            <person name="Flores-Maldonado C."/>
            <person name="Eckert J."/>
            <person name="Raposo G."/>
            <person name="Fleming T.P."/>
            <person name="Cereijido M."/>
            <person name="Balda M.S."/>
            <person name="Matter K."/>
        </authorList>
    </citation>
    <scope>SUBCELLULAR LOCATION</scope>
</reference>
<reference key="9">
    <citation type="journal article" date="2007" name="Mol. Cell. Proteomics">
        <title>Qualitative and quantitative analyses of protein phosphorylation in naive and stimulated mouse synaptosomal preparations.</title>
        <authorList>
            <person name="Munton R.P."/>
            <person name="Tweedie-Cullen R."/>
            <person name="Livingstone-Zatchej M."/>
            <person name="Weinandy F."/>
            <person name="Waidelich M."/>
            <person name="Longo D."/>
            <person name="Gehrig P."/>
            <person name="Potthast F."/>
            <person name="Rutishauser D."/>
            <person name="Gerrits B."/>
            <person name="Panse C."/>
            <person name="Schlapbach R."/>
            <person name="Mansuy I.M."/>
        </authorList>
    </citation>
    <scope>IDENTIFICATION BY MASS SPECTROMETRY [LARGE SCALE ANALYSIS]</scope>
    <source>
        <tissue>Brain cortex</tissue>
    </source>
</reference>
<reference key="10">
    <citation type="journal article" date="2007" name="Proc. Natl. Acad. Sci. U.S.A.">
        <title>Large-scale phosphorylation analysis of mouse liver.</title>
        <authorList>
            <person name="Villen J."/>
            <person name="Beausoleil S.A."/>
            <person name="Gerber S.A."/>
            <person name="Gygi S.P."/>
        </authorList>
    </citation>
    <scope>PHOSPHORYLATION [LARGE SCALE ANALYSIS] AT SER-931 AND SER-959</scope>
    <scope>IDENTIFICATION BY MASS SPECTROMETRY [LARGE SCALE ANALYSIS]</scope>
    <source>
        <tissue>Liver</tissue>
    </source>
</reference>
<reference key="11">
    <citation type="journal article" date="2008" name="Trends Cell Biol.">
        <title>Cellular functions of GEF-H1, a microtubule-regulated Rho-GEF: is altered GEF-H1 activity a crucial determinant of disease pathogenesis?</title>
        <authorList>
            <person name="Birkenfeld J."/>
            <person name="Nalbant P."/>
            <person name="Yoon S.-H."/>
            <person name="Bokoch G.M."/>
        </authorList>
    </citation>
    <scope>REVIEW ON FUNCTION</scope>
</reference>
<reference key="12">
    <citation type="journal article" date="2009" name="Immunity">
        <title>The phagosomal proteome in interferon-gamma-activated macrophages.</title>
        <authorList>
            <person name="Trost M."/>
            <person name="English L."/>
            <person name="Lemieux S."/>
            <person name="Courcelles M."/>
            <person name="Desjardins M."/>
            <person name="Thibault P."/>
        </authorList>
    </citation>
    <scope>PHOSPHORYLATION [LARGE SCALE ANALYSIS] AT SER-163; SER-174; SER-646; SER-781; THR-795; SER-885; SER-931; SER-939; SER-940; SER-955 AND SER-959</scope>
    <scope>IDENTIFICATION BY MASS SPECTROMETRY [LARGE SCALE ANALYSIS]</scope>
</reference>
<reference key="13">
    <citation type="journal article" date="2009" name="Mol. Cell. Proteomics">
        <title>Large scale localization of protein phosphorylation by use of electron capture dissociation mass spectrometry.</title>
        <authorList>
            <person name="Sweet S.M."/>
            <person name="Bailey C.M."/>
            <person name="Cunningham D.L."/>
            <person name="Heath J.K."/>
            <person name="Cooper H.J."/>
        </authorList>
    </citation>
    <scope>PHOSPHORYLATION [LARGE SCALE ANALYSIS] AT SER-646</scope>
    <scope>IDENTIFICATION BY MASS SPECTROMETRY [LARGE SCALE ANALYSIS]</scope>
    <source>
        <tissue>Embryonic fibroblast</tissue>
    </source>
</reference>
<reference key="14">
    <citation type="journal article" date="2010" name="Cell">
        <title>A tissue-specific atlas of mouse protein phosphorylation and expression.</title>
        <authorList>
            <person name="Huttlin E.L."/>
            <person name="Jedrychowski M.P."/>
            <person name="Elias J.E."/>
            <person name="Goswami T."/>
            <person name="Rad R."/>
            <person name="Beausoleil S.A."/>
            <person name="Villen J."/>
            <person name="Haas W."/>
            <person name="Sowa M.E."/>
            <person name="Gygi S.P."/>
        </authorList>
    </citation>
    <scope>PHOSPHORYLATION [LARGE SCALE ANALYSIS] AT SER-151; SER-163; SER-174; SER-885; SER-939; SER-940; THR-944; SER-946; SER-951; SER-952; SER-955 AND SER-959</scope>
    <scope>IDENTIFICATION BY MASS SPECTROMETRY [LARGE SCALE ANALYSIS]</scope>
    <source>
        <tissue>Brain</tissue>
        <tissue>Brown adipose tissue</tissue>
        <tissue>Heart</tissue>
        <tissue>Kidney</tissue>
        <tissue>Lung</tissue>
        <tissue>Pancreas</tissue>
        <tissue>Spleen</tissue>
        <tissue>Testis</tissue>
    </source>
</reference>
<reference key="15">
    <citation type="journal article" date="2011" name="J. Cell Sci.">
        <title>Calpain-6, a microtubule-stabilizing protein, regulates Rac1 activity and cell motility through interaction with GEF-H1.</title>
        <authorList>
            <person name="Tonami K."/>
            <person name="Kurihara Y."/>
            <person name="Arima S."/>
            <person name="Nishiyama K."/>
            <person name="Uchijima Y."/>
            <person name="Asano T."/>
            <person name="Sorimachi H."/>
            <person name="Kurihara H."/>
        </authorList>
    </citation>
    <scope>INTERACTION WITH CAPN6</scope>
</reference>
<reference key="16">
    <citation type="journal article" date="2017" name="PLoS Genet.">
        <title>Homozygous ARHGEF2 mutation causes intellectual disability and midbrain-hindbrain malformation.</title>
        <authorList>
            <person name="Ravindran E."/>
            <person name="Hu H."/>
            <person name="Yuzwa S.A."/>
            <person name="Hernandez-Miranda L.R."/>
            <person name="Kraemer N."/>
            <person name="Ninnemann O."/>
            <person name="Musante L."/>
            <person name="Boltshauser E."/>
            <person name="Schindler D."/>
            <person name="Huebner A."/>
            <person name="Reinecker H.C."/>
            <person name="Ropers H.H."/>
            <person name="Birchmeier C."/>
            <person name="Miller F.D."/>
            <person name="Wienker T.F."/>
            <person name="Huebner C."/>
            <person name="Kaindl A.M."/>
        </authorList>
    </citation>
    <scope>FUNCTION</scope>
    <scope>TISSUE SPECIFICITY</scope>
    <scope>DEVELOPMENTAL STAGE</scope>
    <scope>DISRUPTION PHENOTYPE</scope>
</reference>
<feature type="chain" id="PRO_0000080910" description="Rho guanine nucleotide exchange factor 2">
    <location>
        <begin position="1"/>
        <end position="985"/>
    </location>
</feature>
<feature type="domain" description="DH" evidence="5">
    <location>
        <begin position="236"/>
        <end position="433"/>
    </location>
</feature>
<feature type="domain" description="PH" evidence="6">
    <location>
        <begin position="473"/>
        <end position="572"/>
    </location>
</feature>
<feature type="zinc finger region" description="Phorbol-ester/DAG-type" evidence="7">
    <location>
        <begin position="39"/>
        <end position="86"/>
    </location>
</feature>
<feature type="region of interest" description="Disordered" evidence="8">
    <location>
        <begin position="1"/>
        <end position="32"/>
    </location>
</feature>
<feature type="region of interest" description="Interaction with DYNLT1" evidence="2">
    <location>
        <begin position="131"/>
        <end position="161"/>
    </location>
</feature>
<feature type="region of interest" description="Disordered" evidence="8">
    <location>
        <begin position="890"/>
        <end position="909"/>
    </location>
</feature>
<feature type="region of interest" description="Disordered" evidence="8">
    <location>
        <begin position="918"/>
        <end position="985"/>
    </location>
</feature>
<feature type="coiled-coil region" evidence="4">
    <location>
        <begin position="591"/>
        <end position="619"/>
    </location>
</feature>
<feature type="coiled-coil region" evidence="4">
    <location>
        <begin position="797"/>
        <end position="866"/>
    </location>
</feature>
<feature type="compositionally biased region" description="Basic and acidic residues" evidence="8">
    <location>
        <begin position="919"/>
        <end position="938"/>
    </location>
</feature>
<feature type="compositionally biased region" description="Acidic residues" evidence="8">
    <location>
        <begin position="940"/>
        <end position="949"/>
    </location>
</feature>
<feature type="modified residue" description="Phosphoserine" evidence="3">
    <location>
        <position position="109"/>
    </location>
</feature>
<feature type="modified residue" description="Phosphoserine" evidence="3">
    <location>
        <position position="122"/>
    </location>
</feature>
<feature type="modified residue" description="Phosphoserine" evidence="3">
    <location>
        <position position="129"/>
    </location>
</feature>
<feature type="modified residue" description="Phosphoserine" evidence="3">
    <location>
        <position position="133"/>
    </location>
</feature>
<feature type="modified residue" description="Phosphoserine" evidence="3">
    <location>
        <position position="137"/>
    </location>
</feature>
<feature type="modified residue" description="Phosphoserine; by PAK4" evidence="3">
    <location>
        <position position="143"/>
    </location>
</feature>
<feature type="modified residue" description="Phosphoserine" evidence="20">
    <location>
        <position position="151"/>
    </location>
</feature>
<feature type="modified residue" description="Phosphoserine" evidence="19 20">
    <location>
        <position position="163"/>
    </location>
</feature>
<feature type="modified residue" description="Phosphoserine" evidence="3">
    <location>
        <position position="172"/>
    </location>
</feature>
<feature type="modified residue" description="Phosphoserine" evidence="19 20">
    <location>
        <position position="174"/>
    </location>
</feature>
<feature type="modified residue" description="Phosphoserine" evidence="3">
    <location>
        <position position="177"/>
    </location>
</feature>
<feature type="modified residue" description="N6-acetyllysine" evidence="3">
    <location>
        <position position="354"/>
    </location>
</feature>
<feature type="modified residue" description="Phosphoserine" evidence="18 19">
    <location>
        <position position="646"/>
    </location>
</feature>
<feature type="modified residue" description="Phosphoserine" evidence="3">
    <location>
        <position position="649"/>
    </location>
</feature>
<feature type="modified residue" description="Phosphothreonine; by MAPK1 or MAPK3" evidence="3">
    <location>
        <position position="680"/>
    </location>
</feature>
<feature type="modified residue" description="Phosphoserine" evidence="3">
    <location>
        <position position="692"/>
    </location>
</feature>
<feature type="modified residue" description="Phosphoserine" evidence="3">
    <location>
        <position position="710"/>
    </location>
</feature>
<feature type="modified residue" description="Phosphoserine" evidence="19">
    <location>
        <position position="781"/>
    </location>
</feature>
<feature type="modified residue" description="Phosphothreonine" evidence="19">
    <location>
        <position position="795"/>
    </location>
</feature>
<feature type="modified residue" description="Phosphoserine" evidence="19 20">
    <location>
        <position position="885"/>
    </location>
</feature>
<feature type="modified residue" description="Phosphotyrosine" evidence="3">
    <location>
        <position position="893"/>
    </location>
</feature>
<feature type="modified residue" description="Phosphoserine; by PAK4" evidence="3">
    <location>
        <position position="895"/>
    </location>
</feature>
<feature type="modified residue" description="Phosphoserine" evidence="17 19">
    <location>
        <position position="931"/>
    </location>
</feature>
<feature type="modified residue" description="Phosphoserine" evidence="19 20">
    <location>
        <position position="939"/>
    </location>
</feature>
<feature type="modified residue" description="Phosphoserine" evidence="19 20">
    <location>
        <position position="940"/>
    </location>
</feature>
<feature type="modified residue" description="Phosphothreonine" evidence="20">
    <location>
        <position position="944"/>
    </location>
</feature>
<feature type="modified residue" description="Phosphoserine" evidence="20">
    <location>
        <position position="946"/>
    </location>
</feature>
<feature type="modified residue" description="Phosphoserine" evidence="20">
    <location>
        <position position="951"/>
    </location>
</feature>
<feature type="modified residue" description="Phosphoserine" evidence="20">
    <location>
        <position position="952"/>
    </location>
</feature>
<feature type="modified residue" description="Phosphoserine" evidence="19 20">
    <location>
        <position position="955"/>
    </location>
</feature>
<feature type="modified residue" description="Phosphoserine" evidence="17 19 20">
    <location>
        <position position="959"/>
    </location>
</feature>
<feature type="splice variant" id="VSP_034962" description="In isoform 4 and isoform 5." evidence="12 13">
    <location>
        <begin position="1"/>
        <end position="27"/>
    </location>
</feature>
<feature type="splice variant" id="VSP_022640" description="In isoform 3." evidence="15">
    <original>MSRIESLTRARIDRSKEQATK</original>
    <variation>MSGNRRQPSRRGQ</variation>
    <location>
        <begin position="1"/>
        <end position="21"/>
    </location>
</feature>
<feature type="splice variant" id="VSP_034963" description="In isoform 5." evidence="13">
    <location>
        <begin position="112"/>
        <end position="113"/>
    </location>
</feature>
<feature type="splice variant" id="VSP_022641" description="In isoform 2." evidence="14">
    <location>
        <begin position="574"/>
        <end position="985"/>
    </location>
</feature>
<feature type="splice variant" id="VSP_022642" description="In isoform 3." evidence="15">
    <original>T</original>
    <variation>S</variation>
    <location>
        <position position="596"/>
    </location>
</feature>
<feature type="splice variant" id="VSP_022643" description="In isoform 3." evidence="15">
    <location>
        <begin position="597"/>
        <end position="985"/>
    </location>
</feature>
<feature type="sequence conflict" description="In Ref. 2; CAA65067." evidence="16" ref="2">
    <original>A</original>
    <variation>V</variation>
    <location>
        <position position="156"/>
    </location>
</feature>
<feature type="sequence conflict" description="In Ref. 3; AAG09271." evidence="16" ref="3">
    <original>M</original>
    <variation>V</variation>
    <location>
        <position position="539"/>
    </location>
</feature>
<feature type="sequence conflict" description="In Ref. 3; AAG09271, 4; BAC41438 and 7; AAH06589." evidence="16" ref="3 4 7">
    <original>M</original>
    <variation>T</variation>
    <location>
        <position position="679"/>
    </location>
</feature>
<feature type="sequence conflict" description="In Ref. 5; BAE42325." evidence="16" ref="5">
    <original>H</original>
    <variation>Y</variation>
    <location>
        <position position="810"/>
    </location>
</feature>
<feature type="sequence conflict" description="In Ref. 3; AAG09271." evidence="16" ref="3">
    <original>D</original>
    <variation>G</variation>
    <location>
        <position position="941"/>
    </location>
</feature>
<feature type="helix" evidence="21">
    <location>
        <begin position="140"/>
        <end position="143"/>
    </location>
</feature>
<feature type="strand" evidence="21">
    <location>
        <begin position="145"/>
        <end position="147"/>
    </location>
</feature>
<feature type="strand" evidence="21">
    <location>
        <begin position="153"/>
        <end position="155"/>
    </location>
</feature>